<comment type="function">
    <text evidence="2">dGTPase preferentially hydrolyzes dGTP over the other canonical NTPs.</text>
</comment>
<comment type="catalytic activity">
    <reaction evidence="2">
        <text>dGTP + H2O = 2'-deoxyguanosine + triphosphate + H(+)</text>
        <dbReference type="Rhea" id="RHEA:15193"/>
        <dbReference type="ChEBI" id="CHEBI:15377"/>
        <dbReference type="ChEBI" id="CHEBI:15378"/>
        <dbReference type="ChEBI" id="CHEBI:17172"/>
        <dbReference type="ChEBI" id="CHEBI:18036"/>
        <dbReference type="ChEBI" id="CHEBI:61429"/>
        <dbReference type="EC" id="3.1.5.1"/>
    </reaction>
</comment>
<comment type="cofactor">
    <cofactor evidence="2">
        <name>Mg(2+)</name>
        <dbReference type="ChEBI" id="CHEBI:18420"/>
    </cofactor>
</comment>
<comment type="subunit">
    <text evidence="2">Homotetramer.</text>
</comment>
<comment type="similarity">
    <text evidence="2">Belongs to the dGTPase family. Type 1 subfamily.</text>
</comment>
<proteinExistence type="inferred from homology"/>
<protein>
    <recommendedName>
        <fullName evidence="2">Deoxyguanosinetriphosphate triphosphohydrolase</fullName>
        <shortName evidence="2">dGTP triphosphohydrolase</shortName>
        <shortName evidence="2">dGTPase</shortName>
        <ecNumber evidence="2">3.1.5.1</ecNumber>
    </recommendedName>
</protein>
<reference key="1">
    <citation type="journal article" date="2002" name="Proc. Natl. Acad. Sci. U.S.A.">
        <title>Extensive mosaic structure revealed by the complete genome sequence of uropathogenic Escherichia coli.</title>
        <authorList>
            <person name="Welch R.A."/>
            <person name="Burland V."/>
            <person name="Plunkett G. III"/>
            <person name="Redford P."/>
            <person name="Roesch P."/>
            <person name="Rasko D."/>
            <person name="Buckles E.L."/>
            <person name="Liou S.-R."/>
            <person name="Boutin A."/>
            <person name="Hackett J."/>
            <person name="Stroud D."/>
            <person name="Mayhew G.F."/>
            <person name="Rose D.J."/>
            <person name="Zhou S."/>
            <person name="Schwartz D.C."/>
            <person name="Perna N.T."/>
            <person name="Mobley H.L.T."/>
            <person name="Donnenberg M.S."/>
            <person name="Blattner F.R."/>
        </authorList>
    </citation>
    <scope>NUCLEOTIDE SEQUENCE [LARGE SCALE GENOMIC DNA]</scope>
    <source>
        <strain>CFT073 / ATCC 700928 / UPEC</strain>
    </source>
</reference>
<sequence length="505" mass="59374">MAQIDFRKKINWHRRYRSPQGVKTEHEILRIFESDRGRIINSPAIRRLQQKTQVFPLERNAAVRTRLTHSMEVQQVGRYIAKEILSRLKELKLLEAYGLDELTGPFESIVEMSCLMHDIGNPPFGHFGEAAINDWFRQRLYPEDAESQPLTDDRCSVAALRLRDGEEPLNALRRKIRQDLCHFEGNAQGIRLVHTLMRMNLTWAQVGGILKYTRPAWWRGETPETHHYLMKKPGYYLSEEAYIARLRKELNLALYSRFPLTWIMEAADDISYCVADLEDAVEKRIFTVEQLYHHLHEAWGQHEKGSLFSLVVENAWEKSRSNSLSRSTEDQFFMYLRVNTLNKLVPYAAQRFIDNLPAIFAGTFNHALLEDASECSDLLKLYKNVAVKHVFSHPDVEQLELQGYRVISGLLEIYRPLLNLPLSDFTELVEKERVKRFPIETRLFHKLSTRHRLAYVEAVSKLPSDSPEFPLWEYYYRCRLLQDYISGMTDLYAWDEYRRLMAVEQ</sequence>
<accession>Q8FL13</accession>
<gene>
    <name evidence="2" type="primary">dgt</name>
    <name type="ordered locus">c0196</name>
</gene>
<organism>
    <name type="scientific">Escherichia coli O6:H1 (strain CFT073 / ATCC 700928 / UPEC)</name>
    <dbReference type="NCBI Taxonomy" id="199310"/>
    <lineage>
        <taxon>Bacteria</taxon>
        <taxon>Pseudomonadati</taxon>
        <taxon>Pseudomonadota</taxon>
        <taxon>Gammaproteobacteria</taxon>
        <taxon>Enterobacterales</taxon>
        <taxon>Enterobacteriaceae</taxon>
        <taxon>Escherichia</taxon>
    </lineage>
</organism>
<dbReference type="EC" id="3.1.5.1" evidence="2"/>
<dbReference type="EMBL" id="AE014075">
    <property type="protein sequence ID" value="AAN78690.1"/>
    <property type="molecule type" value="Genomic_DNA"/>
</dbReference>
<dbReference type="RefSeq" id="WP_000057086.1">
    <property type="nucleotide sequence ID" value="NZ_CP051263.1"/>
</dbReference>
<dbReference type="SMR" id="Q8FL13"/>
<dbReference type="STRING" id="199310.c0196"/>
<dbReference type="KEGG" id="ecc:c0196"/>
<dbReference type="eggNOG" id="COG0232">
    <property type="taxonomic scope" value="Bacteria"/>
</dbReference>
<dbReference type="HOGENOM" id="CLU_028163_2_1_6"/>
<dbReference type="BioCyc" id="ECOL199310:C0196-MONOMER"/>
<dbReference type="Proteomes" id="UP000001410">
    <property type="component" value="Chromosome"/>
</dbReference>
<dbReference type="GO" id="GO:0008832">
    <property type="term" value="F:dGTPase activity"/>
    <property type="evidence" value="ECO:0007669"/>
    <property type="project" value="UniProtKB-UniRule"/>
</dbReference>
<dbReference type="GO" id="GO:0000287">
    <property type="term" value="F:magnesium ion binding"/>
    <property type="evidence" value="ECO:0007669"/>
    <property type="project" value="UniProtKB-UniRule"/>
</dbReference>
<dbReference type="GO" id="GO:0006203">
    <property type="term" value="P:dGTP catabolic process"/>
    <property type="evidence" value="ECO:0007669"/>
    <property type="project" value="InterPro"/>
</dbReference>
<dbReference type="CDD" id="cd00077">
    <property type="entry name" value="HDc"/>
    <property type="match status" value="1"/>
</dbReference>
<dbReference type="FunFam" id="1.10.3210.10:FF:000009">
    <property type="entry name" value="Deoxyguanosinetriphosphate triphosphohydrolase"/>
    <property type="match status" value="1"/>
</dbReference>
<dbReference type="FunFam" id="1.10.3210.10:FF:000010">
    <property type="entry name" value="Deoxyguanosinetriphosphate triphosphohydrolase"/>
    <property type="match status" value="1"/>
</dbReference>
<dbReference type="FunFam" id="1.10.3410.10:FF:000001">
    <property type="entry name" value="Deoxyguanosinetriphosphate triphosphohydrolase"/>
    <property type="match status" value="1"/>
</dbReference>
<dbReference type="Gene3D" id="1.10.3210.10">
    <property type="entry name" value="Hypothetical protein af1432"/>
    <property type="match status" value="2"/>
</dbReference>
<dbReference type="Gene3D" id="1.10.3410.10">
    <property type="entry name" value="putative deoxyguanosinetriphosphate triphosphohydrolase like domain"/>
    <property type="match status" value="1"/>
</dbReference>
<dbReference type="HAMAP" id="MF_00030">
    <property type="entry name" value="dGTPase_type1"/>
    <property type="match status" value="1"/>
</dbReference>
<dbReference type="InterPro" id="IPR023293">
    <property type="entry name" value="dGTP_triP_hydro_central_sf"/>
</dbReference>
<dbReference type="InterPro" id="IPR006261">
    <property type="entry name" value="dGTPase"/>
</dbReference>
<dbReference type="InterPro" id="IPR050135">
    <property type="entry name" value="dGTPase-like"/>
</dbReference>
<dbReference type="InterPro" id="IPR020779">
    <property type="entry name" value="dNTPase_1"/>
</dbReference>
<dbReference type="InterPro" id="IPR003607">
    <property type="entry name" value="HD/PDEase_dom"/>
</dbReference>
<dbReference type="InterPro" id="IPR006674">
    <property type="entry name" value="HD_domain"/>
</dbReference>
<dbReference type="NCBIfam" id="TIGR01353">
    <property type="entry name" value="dGTP_triPase"/>
    <property type="match status" value="1"/>
</dbReference>
<dbReference type="NCBIfam" id="NF003429">
    <property type="entry name" value="PRK04926.1"/>
    <property type="match status" value="1"/>
</dbReference>
<dbReference type="PANTHER" id="PTHR11373:SF32">
    <property type="entry name" value="DEOXYGUANOSINETRIPHOSPHATE TRIPHOSPHOHYDROLASE"/>
    <property type="match status" value="1"/>
</dbReference>
<dbReference type="PANTHER" id="PTHR11373">
    <property type="entry name" value="DEOXYNUCLEOSIDE TRIPHOSPHATE TRIPHOSPHOHYDROLASE"/>
    <property type="match status" value="1"/>
</dbReference>
<dbReference type="Pfam" id="PF01966">
    <property type="entry name" value="HD"/>
    <property type="match status" value="1"/>
</dbReference>
<dbReference type="SMART" id="SM00471">
    <property type="entry name" value="HDc"/>
    <property type="match status" value="1"/>
</dbReference>
<dbReference type="SUPFAM" id="SSF109604">
    <property type="entry name" value="HD-domain/PDEase-like"/>
    <property type="match status" value="1"/>
</dbReference>
<dbReference type="PROSITE" id="PS51831">
    <property type="entry name" value="HD"/>
    <property type="match status" value="1"/>
</dbReference>
<feature type="initiator methionine" description="Removed" evidence="1">
    <location>
        <position position="1"/>
    </location>
</feature>
<feature type="chain" id="PRO_0000205280" description="Deoxyguanosinetriphosphate triphosphohydrolase">
    <location>
        <begin position="2"/>
        <end position="505"/>
    </location>
</feature>
<feature type="domain" description="HD" evidence="3">
    <location>
        <begin position="66"/>
        <end position="273"/>
    </location>
</feature>
<evidence type="ECO:0000250" key="1"/>
<evidence type="ECO:0000255" key="2">
    <source>
        <dbReference type="HAMAP-Rule" id="MF_00030"/>
    </source>
</evidence>
<evidence type="ECO:0000255" key="3">
    <source>
        <dbReference type="PROSITE-ProRule" id="PRU01175"/>
    </source>
</evidence>
<name>DGTP_ECOL6</name>
<keyword id="KW-0378">Hydrolase</keyword>
<keyword id="KW-0460">Magnesium</keyword>
<keyword id="KW-1185">Reference proteome</keyword>